<accession>B0U3J1</accession>
<sequence>MIYLHAIDPIAFSLGPVKVHWYGLMYLAGFGAAWCLGRQRIQAGRLLGVNIDGFSDLLFYAMMGVVLGGRVGYMLFYAFHDFLQEPLLLFRVWEGGMSFHGGLIGVLLAVAWWSRRQRMHMFDVVDFCAPLVPVGLGFGRLGNFIGGELWGKLTHNGWGVIFPRAPLSDVPAGQLAMQDVMNFVQIQEHYAAGLLGHYARHPSQLYEAFLEGLVMFIVLWLFSRKLRPRYAVSGLFALLYGVFRFLVEFVRMPDNGVYVAFGWLTRGQILSLPLIVIGLFLFWLSCRSPVLQPVPAPEVAK</sequence>
<keyword id="KW-0997">Cell inner membrane</keyword>
<keyword id="KW-1003">Cell membrane</keyword>
<keyword id="KW-0472">Membrane</keyword>
<keyword id="KW-0808">Transferase</keyword>
<keyword id="KW-0812">Transmembrane</keyword>
<keyword id="KW-1133">Transmembrane helix</keyword>
<gene>
    <name evidence="1" type="primary">lgt</name>
    <name type="ordered locus">Xfasm12_1505</name>
</gene>
<evidence type="ECO:0000255" key="1">
    <source>
        <dbReference type="HAMAP-Rule" id="MF_01147"/>
    </source>
</evidence>
<comment type="function">
    <text evidence="1">Catalyzes the transfer of the diacylglyceryl group from phosphatidylglycerol to the sulfhydryl group of the N-terminal cysteine of a prolipoprotein, the first step in the formation of mature lipoproteins.</text>
</comment>
<comment type="catalytic activity">
    <reaction evidence="1">
        <text>L-cysteinyl-[prolipoprotein] + a 1,2-diacyl-sn-glycero-3-phospho-(1'-sn-glycerol) = an S-1,2-diacyl-sn-glyceryl-L-cysteinyl-[prolipoprotein] + sn-glycerol 1-phosphate + H(+)</text>
        <dbReference type="Rhea" id="RHEA:56712"/>
        <dbReference type="Rhea" id="RHEA-COMP:14679"/>
        <dbReference type="Rhea" id="RHEA-COMP:14680"/>
        <dbReference type="ChEBI" id="CHEBI:15378"/>
        <dbReference type="ChEBI" id="CHEBI:29950"/>
        <dbReference type="ChEBI" id="CHEBI:57685"/>
        <dbReference type="ChEBI" id="CHEBI:64716"/>
        <dbReference type="ChEBI" id="CHEBI:140658"/>
        <dbReference type="EC" id="2.5.1.145"/>
    </reaction>
</comment>
<comment type="pathway">
    <text evidence="1">Protein modification; lipoprotein biosynthesis (diacylglyceryl transfer).</text>
</comment>
<comment type="subcellular location">
    <subcellularLocation>
        <location evidence="1">Cell inner membrane</location>
        <topology evidence="1">Multi-pass membrane protein</topology>
    </subcellularLocation>
</comment>
<comment type="similarity">
    <text evidence="1">Belongs to the Lgt family.</text>
</comment>
<protein>
    <recommendedName>
        <fullName evidence="1">Phosphatidylglycerol--prolipoprotein diacylglyceryl transferase</fullName>
        <ecNumber evidence="1">2.5.1.145</ecNumber>
    </recommendedName>
</protein>
<reference key="1">
    <citation type="journal article" date="2010" name="J. Bacteriol.">
        <title>Whole genome sequences of two Xylella fastidiosa strains (M12 and M23) causing almond leaf scorch disease in California.</title>
        <authorList>
            <person name="Chen J."/>
            <person name="Xie G."/>
            <person name="Han S."/>
            <person name="Chertkov O."/>
            <person name="Sims D."/>
            <person name="Civerolo E.L."/>
        </authorList>
    </citation>
    <scope>NUCLEOTIDE SEQUENCE [LARGE SCALE GENOMIC DNA]</scope>
    <source>
        <strain>M12</strain>
    </source>
</reference>
<dbReference type="EC" id="2.5.1.145" evidence="1"/>
<dbReference type="EMBL" id="CP000941">
    <property type="protein sequence ID" value="ACA12420.1"/>
    <property type="molecule type" value="Genomic_DNA"/>
</dbReference>
<dbReference type="RefSeq" id="WP_004085861.1">
    <property type="nucleotide sequence ID" value="NC_010513.1"/>
</dbReference>
<dbReference type="SMR" id="B0U3J1"/>
<dbReference type="KEGG" id="xfm:Xfasm12_1505"/>
<dbReference type="HOGENOM" id="CLU_013386_1_0_6"/>
<dbReference type="UniPathway" id="UPA00664"/>
<dbReference type="GO" id="GO:0005886">
    <property type="term" value="C:plasma membrane"/>
    <property type="evidence" value="ECO:0007669"/>
    <property type="project" value="UniProtKB-SubCell"/>
</dbReference>
<dbReference type="GO" id="GO:0008961">
    <property type="term" value="F:phosphatidylglycerol-prolipoprotein diacylglyceryl transferase activity"/>
    <property type="evidence" value="ECO:0007669"/>
    <property type="project" value="UniProtKB-UniRule"/>
</dbReference>
<dbReference type="GO" id="GO:0042158">
    <property type="term" value="P:lipoprotein biosynthetic process"/>
    <property type="evidence" value="ECO:0007669"/>
    <property type="project" value="UniProtKB-UniRule"/>
</dbReference>
<dbReference type="HAMAP" id="MF_01147">
    <property type="entry name" value="Lgt"/>
    <property type="match status" value="1"/>
</dbReference>
<dbReference type="InterPro" id="IPR001640">
    <property type="entry name" value="Lgt"/>
</dbReference>
<dbReference type="NCBIfam" id="TIGR00544">
    <property type="entry name" value="lgt"/>
    <property type="match status" value="1"/>
</dbReference>
<dbReference type="PANTHER" id="PTHR30589:SF0">
    <property type="entry name" value="PHOSPHATIDYLGLYCEROL--PROLIPOPROTEIN DIACYLGLYCERYL TRANSFERASE"/>
    <property type="match status" value="1"/>
</dbReference>
<dbReference type="PANTHER" id="PTHR30589">
    <property type="entry name" value="PROLIPOPROTEIN DIACYLGLYCERYL TRANSFERASE"/>
    <property type="match status" value="1"/>
</dbReference>
<dbReference type="Pfam" id="PF01790">
    <property type="entry name" value="LGT"/>
    <property type="match status" value="1"/>
</dbReference>
<dbReference type="PROSITE" id="PS01311">
    <property type="entry name" value="LGT"/>
    <property type="match status" value="1"/>
</dbReference>
<organism>
    <name type="scientific">Xylella fastidiosa (strain M12)</name>
    <dbReference type="NCBI Taxonomy" id="405440"/>
    <lineage>
        <taxon>Bacteria</taxon>
        <taxon>Pseudomonadati</taxon>
        <taxon>Pseudomonadota</taxon>
        <taxon>Gammaproteobacteria</taxon>
        <taxon>Lysobacterales</taxon>
        <taxon>Lysobacteraceae</taxon>
        <taxon>Xylella</taxon>
    </lineage>
</organism>
<proteinExistence type="inferred from homology"/>
<feature type="chain" id="PRO_1000137475" description="Phosphatidylglycerol--prolipoprotein diacylglyceryl transferase">
    <location>
        <begin position="1"/>
        <end position="301"/>
    </location>
</feature>
<feature type="transmembrane region" description="Helical" evidence="1">
    <location>
        <begin position="10"/>
        <end position="30"/>
    </location>
</feature>
<feature type="transmembrane region" description="Helical" evidence="1">
    <location>
        <begin position="57"/>
        <end position="77"/>
    </location>
</feature>
<feature type="transmembrane region" description="Helical" evidence="1">
    <location>
        <begin position="92"/>
        <end position="112"/>
    </location>
</feature>
<feature type="transmembrane region" description="Helical" evidence="1">
    <location>
        <begin position="119"/>
        <end position="139"/>
    </location>
</feature>
<feature type="transmembrane region" description="Helical" evidence="1">
    <location>
        <begin position="202"/>
        <end position="222"/>
    </location>
</feature>
<feature type="transmembrane region" description="Helical" evidence="1">
    <location>
        <begin position="230"/>
        <end position="250"/>
    </location>
</feature>
<feature type="transmembrane region" description="Helical" evidence="1">
    <location>
        <begin position="264"/>
        <end position="284"/>
    </location>
</feature>
<feature type="binding site" evidence="1">
    <location>
        <position position="140"/>
    </location>
    <ligand>
        <name>a 1,2-diacyl-sn-glycero-3-phospho-(1'-sn-glycerol)</name>
        <dbReference type="ChEBI" id="CHEBI:64716"/>
    </ligand>
</feature>
<name>LGT_XYLFM</name>